<name>PSB_METST</name>
<organism>
    <name type="scientific">Methanosphaera stadtmanae (strain ATCC 43021 / DSM 3091 / JCM 11832 / MCB-3)</name>
    <dbReference type="NCBI Taxonomy" id="339860"/>
    <lineage>
        <taxon>Archaea</taxon>
        <taxon>Methanobacteriati</taxon>
        <taxon>Methanobacteriota</taxon>
        <taxon>Methanomada group</taxon>
        <taxon>Methanobacteria</taxon>
        <taxon>Methanobacteriales</taxon>
        <taxon>Methanobacteriaceae</taxon>
        <taxon>Methanosphaera</taxon>
    </lineage>
</organism>
<proteinExistence type="inferred from homology"/>
<evidence type="ECO:0000255" key="1">
    <source>
        <dbReference type="HAMAP-Rule" id="MF_02113"/>
    </source>
</evidence>
<comment type="function">
    <text evidence="1">Component of the proteasome core, a large protease complex with broad specificity involved in protein degradation.</text>
</comment>
<comment type="catalytic activity">
    <reaction evidence="1">
        <text>Cleavage of peptide bonds with very broad specificity.</text>
        <dbReference type="EC" id="3.4.25.1"/>
    </reaction>
</comment>
<comment type="activity regulation">
    <text evidence="1">The formation of the proteasomal ATPase PAN-20S proteasome complex, via the docking of the C-termini of PAN into the intersubunit pockets in the alpha-rings, triggers opening of the gate for substrate entry. Interconversion between the open-gate and close-gate conformations leads to a dynamic regulation of the 20S proteasome proteolysis activity.</text>
</comment>
<comment type="subunit">
    <text evidence="1">The 20S proteasome core is composed of 14 alpha and 14 beta subunits that assemble into four stacked heptameric rings, resulting in a barrel-shaped structure. The two inner rings, each composed of seven catalytic beta subunits, are sandwiched by two outer rings, each composed of seven alpha subunits. The catalytic chamber with the active sites is on the inside of the barrel. Has a gated structure, the ends of the cylinder being occluded by the N-termini of the alpha-subunits. Is capped at one or both ends by the proteasome regulatory ATPase, PAN.</text>
</comment>
<comment type="subcellular location">
    <subcellularLocation>
        <location evidence="1">Cytoplasm</location>
    </subcellularLocation>
</comment>
<comment type="similarity">
    <text evidence="1">Belongs to the peptidase T1B family.</text>
</comment>
<protein>
    <recommendedName>
        <fullName evidence="1">Proteasome subunit beta</fullName>
        <ecNumber evidence="1">3.4.25.1</ecNumber>
    </recommendedName>
    <alternativeName>
        <fullName evidence="1">20S proteasome beta subunit</fullName>
    </alternativeName>
    <alternativeName>
        <fullName evidence="1">Proteasome core protein PsmB</fullName>
    </alternativeName>
</protein>
<sequence length="205" mass="22360">MNQTENMEGTTTVGFVCTDGVVLATETRATMGSLVANKNADKLFQIDDKIGATIAGTVSHAQSLMDILKAEISLYKLRNEKDMSIDALAVLTSNILKSRPYYVQTILAGVDKDGAKLYTLDPSGSYIPDTFTSTGSGSPYAFGVLEDRYNEDITTEEGKKIAIKAITSAMERDVYSGNNYRLGVITKDGMKIYTKEEIAQIKKQL</sequence>
<accession>Q2NI68</accession>
<keyword id="KW-0068">Autocatalytic cleavage</keyword>
<keyword id="KW-0963">Cytoplasm</keyword>
<keyword id="KW-0378">Hydrolase</keyword>
<keyword id="KW-0645">Protease</keyword>
<keyword id="KW-0647">Proteasome</keyword>
<keyword id="KW-1185">Reference proteome</keyword>
<keyword id="KW-0888">Threonine protease</keyword>
<keyword id="KW-0865">Zymogen</keyword>
<gene>
    <name evidence="1" type="primary">psmB</name>
    <name type="ordered locus">Msp_0282</name>
</gene>
<reference key="1">
    <citation type="journal article" date="2006" name="J. Bacteriol.">
        <title>The genome sequence of Methanosphaera stadtmanae reveals why this human intestinal archaeon is restricted to methanol and H2 for methane formation and ATP synthesis.</title>
        <authorList>
            <person name="Fricke W.F."/>
            <person name="Seedorf H."/>
            <person name="Henne A."/>
            <person name="Kruer M."/>
            <person name="Liesegang H."/>
            <person name="Hedderich R."/>
            <person name="Gottschalk G."/>
            <person name="Thauer R.K."/>
        </authorList>
    </citation>
    <scope>NUCLEOTIDE SEQUENCE [LARGE SCALE GENOMIC DNA]</scope>
    <source>
        <strain>ATCC 43021 / DSM 3091 / JCM 11832 / MCB-3</strain>
    </source>
</reference>
<feature type="propeptide" id="PRO_0000397374" description="Removed in mature form; by autocatalysis" evidence="1">
    <location>
        <begin position="1"/>
        <end position="9"/>
    </location>
</feature>
<feature type="chain" id="PRO_0000397375" description="Proteasome subunit beta">
    <location>
        <begin position="10"/>
        <end position="205"/>
    </location>
</feature>
<feature type="active site" description="Nucleophile" evidence="1">
    <location>
        <position position="10"/>
    </location>
</feature>
<dbReference type="EC" id="3.4.25.1" evidence="1"/>
<dbReference type="EMBL" id="CP000102">
    <property type="protein sequence ID" value="ABC56692.1"/>
    <property type="molecule type" value="Genomic_DNA"/>
</dbReference>
<dbReference type="RefSeq" id="WP_011405892.1">
    <property type="nucleotide sequence ID" value="NC_007681.1"/>
</dbReference>
<dbReference type="SMR" id="Q2NI68"/>
<dbReference type="STRING" id="339860.Msp_0282"/>
<dbReference type="MEROPS" id="T01.002"/>
<dbReference type="GeneID" id="41324855"/>
<dbReference type="KEGG" id="mst:Msp_0282"/>
<dbReference type="eggNOG" id="arCOG00970">
    <property type="taxonomic scope" value="Archaea"/>
</dbReference>
<dbReference type="HOGENOM" id="CLU_035750_7_2_2"/>
<dbReference type="OrthoDB" id="6330at2157"/>
<dbReference type="Proteomes" id="UP000001931">
    <property type="component" value="Chromosome"/>
</dbReference>
<dbReference type="GO" id="GO:0005737">
    <property type="term" value="C:cytoplasm"/>
    <property type="evidence" value="ECO:0007669"/>
    <property type="project" value="UniProtKB-SubCell"/>
</dbReference>
<dbReference type="GO" id="GO:0019774">
    <property type="term" value="C:proteasome core complex, beta-subunit complex"/>
    <property type="evidence" value="ECO:0007669"/>
    <property type="project" value="UniProtKB-UniRule"/>
</dbReference>
<dbReference type="GO" id="GO:0004298">
    <property type="term" value="F:threonine-type endopeptidase activity"/>
    <property type="evidence" value="ECO:0007669"/>
    <property type="project" value="UniProtKB-UniRule"/>
</dbReference>
<dbReference type="GO" id="GO:0010498">
    <property type="term" value="P:proteasomal protein catabolic process"/>
    <property type="evidence" value="ECO:0007669"/>
    <property type="project" value="UniProtKB-UniRule"/>
</dbReference>
<dbReference type="CDD" id="cd03764">
    <property type="entry name" value="proteasome_beta_archeal"/>
    <property type="match status" value="1"/>
</dbReference>
<dbReference type="FunFam" id="3.60.20.10:FF:000049">
    <property type="entry name" value="Proteasome subunit beta"/>
    <property type="match status" value="1"/>
</dbReference>
<dbReference type="Gene3D" id="3.60.20.10">
    <property type="entry name" value="Glutamine Phosphoribosylpyrophosphate, subunit 1, domain 1"/>
    <property type="match status" value="1"/>
</dbReference>
<dbReference type="HAMAP" id="MF_02113_A">
    <property type="entry name" value="Proteasome_B_A"/>
    <property type="match status" value="1"/>
</dbReference>
<dbReference type="InterPro" id="IPR029055">
    <property type="entry name" value="Ntn_hydrolases_N"/>
</dbReference>
<dbReference type="InterPro" id="IPR019983">
    <property type="entry name" value="Pept_T1A_Psome_bsu_arc"/>
</dbReference>
<dbReference type="InterPro" id="IPR000243">
    <property type="entry name" value="Pept_T1A_subB"/>
</dbReference>
<dbReference type="InterPro" id="IPR001353">
    <property type="entry name" value="Proteasome_sua/b"/>
</dbReference>
<dbReference type="InterPro" id="IPR023333">
    <property type="entry name" value="Proteasome_suB-type"/>
</dbReference>
<dbReference type="NCBIfam" id="TIGR03634">
    <property type="entry name" value="arc_protsome_B"/>
    <property type="match status" value="1"/>
</dbReference>
<dbReference type="PANTHER" id="PTHR32194:SF0">
    <property type="entry name" value="ATP-DEPENDENT PROTEASE SUBUNIT HSLV"/>
    <property type="match status" value="1"/>
</dbReference>
<dbReference type="PANTHER" id="PTHR32194">
    <property type="entry name" value="METALLOPROTEASE TLDD"/>
    <property type="match status" value="1"/>
</dbReference>
<dbReference type="Pfam" id="PF00227">
    <property type="entry name" value="Proteasome"/>
    <property type="match status" value="1"/>
</dbReference>
<dbReference type="PRINTS" id="PR00141">
    <property type="entry name" value="PROTEASOME"/>
</dbReference>
<dbReference type="SUPFAM" id="SSF56235">
    <property type="entry name" value="N-terminal nucleophile aminohydrolases (Ntn hydrolases)"/>
    <property type="match status" value="1"/>
</dbReference>
<dbReference type="PROSITE" id="PS51476">
    <property type="entry name" value="PROTEASOME_BETA_2"/>
    <property type="match status" value="1"/>
</dbReference>